<proteinExistence type="predicted"/>
<sequence length="59" mass="6615">MDPAKIWWHSCLLSHKSWCNCTEPRNHLPGWPTSEGTSTEDGDIITDAEMLTLAEDTEG</sequence>
<organism>
    <name type="scientific">Torque teno tupaia virus (isolate Tbc-TTV14)</name>
    <dbReference type="NCBI Taxonomy" id="766185"/>
    <lineage>
        <taxon>Viruses</taxon>
        <taxon>Viruses incertae sedis</taxon>
        <taxon>Anelloviridae</taxon>
        <taxon>Deltatorquevirus</taxon>
        <taxon>Deltatorquevirus tupai1</taxon>
    </lineage>
</organism>
<dbReference type="EMBL" id="AB057358">
    <property type="protein sequence ID" value="BAB63952.1"/>
    <property type="molecule type" value="Genomic_DNA"/>
</dbReference>
<dbReference type="Proteomes" id="UP000006636">
    <property type="component" value="Segment"/>
</dbReference>
<gene>
    <name type="ORF">ORF2</name>
</gene>
<protein>
    <recommendedName>
        <fullName>Uncharacterized ORF2 protein</fullName>
    </recommendedName>
</protein>
<reference key="1">
    <citation type="journal article" date="2001" name="J. Gen. Virol.">
        <title>Genomic and evolutionary characterization of TT virus (TTV) in tupaias and comparison with species-specific TTVs in humans and non-human primates.</title>
        <authorList>
            <person name="Okamoto H."/>
            <person name="Nishizawa T."/>
            <person name="Takahashi M."/>
            <person name="Tawara A."/>
            <person name="Peng Y."/>
            <person name="Kishimoto J."/>
            <person name="Wang Y."/>
        </authorList>
    </citation>
    <scope>NUCLEOTIDE SEQUENCE [GENOMIC DNA]</scope>
</reference>
<organismHost>
    <name type="scientific">Tupaia</name>
    <dbReference type="NCBI Taxonomy" id="9394"/>
</organismHost>
<feature type="chain" id="PRO_0000404281" description="Uncharacterized ORF2 protein">
    <location>
        <begin position="1"/>
        <end position="59"/>
    </location>
</feature>
<name>ORF2_TTVD1</name>
<keyword id="KW-1185">Reference proteome</keyword>
<accession>Q91PQ2</accession>